<keyword id="KW-0007">Acetylation</keyword>
<keyword id="KW-1003">Cell membrane</keyword>
<keyword id="KW-0966">Cell projection</keyword>
<keyword id="KW-0449">Lipoprotein</keyword>
<keyword id="KW-0472">Membrane</keyword>
<keyword id="KW-0564">Palmitate</keyword>
<keyword id="KW-0597">Phosphoprotein</keyword>
<keyword id="KW-1185">Reference proteome</keyword>
<keyword id="KW-0728">SH3 domain</keyword>
<accession>Q17QN6</accession>
<organism>
    <name type="scientific">Bos taurus</name>
    <name type="common">Bovine</name>
    <dbReference type="NCBI Taxonomy" id="9913"/>
    <lineage>
        <taxon>Eukaryota</taxon>
        <taxon>Metazoa</taxon>
        <taxon>Chordata</taxon>
        <taxon>Craniata</taxon>
        <taxon>Vertebrata</taxon>
        <taxon>Euteleostomi</taxon>
        <taxon>Mammalia</taxon>
        <taxon>Eutheria</taxon>
        <taxon>Laurasiatheria</taxon>
        <taxon>Artiodactyla</taxon>
        <taxon>Ruminantia</taxon>
        <taxon>Pecora</taxon>
        <taxon>Bovidae</taxon>
        <taxon>Bovinae</taxon>
        <taxon>Bos</taxon>
    </lineage>
</organism>
<comment type="function">
    <text evidence="1">Essential regulator of neutrophil polarity. Regulates neutrophil polarization by regulating AKT1 phosphorylation through a mechanism that is independent of PIK3CG activity (By similarity).</text>
</comment>
<comment type="subunit">
    <text evidence="1 7">Heterodimer with PALS1. Interacts with DLG5 and NF2. Interacts (via guanylate kinase-like domain) with WHRN (via third PDZ domain) (By similarity). Interacts with PALS1.</text>
</comment>
<comment type="subcellular location">
    <subcellularLocation>
        <location evidence="3">Cell membrane</location>
        <topology evidence="3">Lipid-anchor</topology>
    </subcellularLocation>
    <subcellularLocation>
        <location evidence="2">Cell projection</location>
        <location evidence="2">Stereocilium</location>
    </subcellularLocation>
    <text evidence="2 3">Colocalizes with WHRN at stereocilium tip during hair cell development. Colocalizes with PALS1 in the retina, at the outer limiting membrane (OLM). Colocalizes with WHRN in the retina, at the outer limiting membrane (OLM), outer plexifirm layer (OPL), basal bodies, and at connecting cilium (CC) (By similarity). Colocalizes with NF2 in non-myelin-forming Schwann cells (By similarity).</text>
</comment>
<comment type="PTM">
    <text evidence="3">Palmitoylated.</text>
</comment>
<comment type="similarity">
    <text evidence="8">Belongs to the MAGUK family.</text>
</comment>
<sequence length="466" mass="52184">MTLKASEGEGGGGMRTALSDLYLEHLLQKHNRPEPVSPQLSAVMEDMYTNGPAALGSPAQTQGQEARKVRLIQFEKVTEEPMGITLKLNEKQSCTVARILHGGMVHRQGSLHVGDEILEINGTNVTNHSVDQLQKAMKETKGMISLKVIPNQQNRLPALQMFMRAQFDYDPRKDNLIPCKEAGLKFLTGDVIQIINKDDSNWWQGRVEGSSQESAGLIPSPELQEWRVASGAHSAPSEAPSCSPFGKKKKYKDKYLAKHSAIFDQLDVVSYEEVVRLPAFKRKTLVLIGASGVGRSHIKSALLSQNPDKFAYPAPYTTRPARKSEEDGKEYHFISTEEMTRSISANEFLEFGSYQGNMFGTKFETVHQIHKQDKVAILDIEPQTLKIVRTAELSPFIVFIAPTDQGTQTDTLQQLQKDSEAIRSQYAHYFDLSLVNNSVEETLKTLQETFDQACRSPQWVPVSWVY</sequence>
<evidence type="ECO:0000250" key="1"/>
<evidence type="ECO:0000250" key="2">
    <source>
        <dbReference type="UniProtKB" id="P70290"/>
    </source>
</evidence>
<evidence type="ECO:0000250" key="3">
    <source>
        <dbReference type="UniProtKB" id="Q00013"/>
    </source>
</evidence>
<evidence type="ECO:0000255" key="4">
    <source>
        <dbReference type="PROSITE-ProRule" id="PRU00100"/>
    </source>
</evidence>
<evidence type="ECO:0000255" key="5">
    <source>
        <dbReference type="PROSITE-ProRule" id="PRU00143"/>
    </source>
</evidence>
<evidence type="ECO:0000255" key="6">
    <source>
        <dbReference type="PROSITE-ProRule" id="PRU00192"/>
    </source>
</evidence>
<evidence type="ECO:0000269" key="7">
    <source>
    </source>
</evidence>
<evidence type="ECO:0000305" key="8"/>
<protein>
    <recommendedName>
        <fullName>55 kDa erythrocyte membrane protein</fullName>
        <shortName>p55</shortName>
    </recommendedName>
    <alternativeName>
        <fullName>Membrane protein, palmitoylated 1</fullName>
    </alternativeName>
</protein>
<dbReference type="EMBL" id="BC118256">
    <property type="protein sequence ID" value="AAI18257.1"/>
    <property type="molecule type" value="mRNA"/>
</dbReference>
<dbReference type="RefSeq" id="NP_001068952.1">
    <property type="nucleotide sequence ID" value="NM_001075484.1"/>
</dbReference>
<dbReference type="SMR" id="Q17QN6"/>
<dbReference type="FunCoup" id="Q17QN6">
    <property type="interactions" value="751"/>
</dbReference>
<dbReference type="STRING" id="9913.ENSBTAP00000071214"/>
<dbReference type="PaxDb" id="9913-ENSBTAP00000017340"/>
<dbReference type="GeneID" id="510998"/>
<dbReference type="KEGG" id="bta:510998"/>
<dbReference type="CTD" id="4354"/>
<dbReference type="VEuPathDB" id="HostDB:ENSBTAG00000013046"/>
<dbReference type="eggNOG" id="KOG0609">
    <property type="taxonomic scope" value="Eukaryota"/>
</dbReference>
<dbReference type="HOGENOM" id="CLU_001715_5_1_1"/>
<dbReference type="InParanoid" id="Q17QN6"/>
<dbReference type="OMA" id="FERACNS"/>
<dbReference type="OrthoDB" id="65789at2759"/>
<dbReference type="TreeFam" id="TF314263"/>
<dbReference type="Proteomes" id="UP000009136">
    <property type="component" value="Chromosome X"/>
</dbReference>
<dbReference type="Bgee" id="ENSBTAG00000013046">
    <property type="expression patterns" value="Expressed in jejunum and 105 other cell types or tissues"/>
</dbReference>
<dbReference type="GO" id="GO:0005911">
    <property type="term" value="C:cell-cell junction"/>
    <property type="evidence" value="ECO:0000318"/>
    <property type="project" value="GO_Central"/>
</dbReference>
<dbReference type="GO" id="GO:0005886">
    <property type="term" value="C:plasma membrane"/>
    <property type="evidence" value="ECO:0000318"/>
    <property type="project" value="GO_Central"/>
</dbReference>
<dbReference type="GO" id="GO:0032420">
    <property type="term" value="C:stereocilium"/>
    <property type="evidence" value="ECO:0007669"/>
    <property type="project" value="UniProtKB-SubCell"/>
</dbReference>
<dbReference type="GO" id="GO:0005102">
    <property type="term" value="F:signaling receptor binding"/>
    <property type="evidence" value="ECO:0000318"/>
    <property type="project" value="GO_Central"/>
</dbReference>
<dbReference type="GO" id="GO:0090022">
    <property type="term" value="P:regulation of neutrophil chemotaxis"/>
    <property type="evidence" value="ECO:0000250"/>
    <property type="project" value="UniProtKB"/>
</dbReference>
<dbReference type="CDD" id="cd00071">
    <property type="entry name" value="GMPK"/>
    <property type="match status" value="1"/>
</dbReference>
<dbReference type="CDD" id="cd10830">
    <property type="entry name" value="PDZ_MPP1-like"/>
    <property type="match status" value="1"/>
</dbReference>
<dbReference type="CDD" id="cd12080">
    <property type="entry name" value="SH3_MPP1"/>
    <property type="match status" value="1"/>
</dbReference>
<dbReference type="FunFam" id="2.30.30.40:FF:000135">
    <property type="entry name" value="55 kDa erythrocyte membrane protein"/>
    <property type="match status" value="1"/>
</dbReference>
<dbReference type="FunFam" id="3.40.50.300:FF:000146">
    <property type="entry name" value="MAGUK p55 subfamily member 6 isoform X1"/>
    <property type="match status" value="1"/>
</dbReference>
<dbReference type="FunFam" id="2.30.42.10:FF:000016">
    <property type="entry name" value="peripheral plasma membrane protein CASK isoform X2"/>
    <property type="match status" value="1"/>
</dbReference>
<dbReference type="Gene3D" id="2.30.42.10">
    <property type="match status" value="1"/>
</dbReference>
<dbReference type="Gene3D" id="3.40.50.300">
    <property type="entry name" value="P-loop containing nucleotide triphosphate hydrolases"/>
    <property type="match status" value="1"/>
</dbReference>
<dbReference type="Gene3D" id="2.30.30.40">
    <property type="entry name" value="SH3 Domains"/>
    <property type="match status" value="1"/>
</dbReference>
<dbReference type="InterPro" id="IPR008145">
    <property type="entry name" value="GK/Ca_channel_bsu"/>
</dbReference>
<dbReference type="InterPro" id="IPR008144">
    <property type="entry name" value="Guanylate_kin-like_dom"/>
</dbReference>
<dbReference type="InterPro" id="IPR020590">
    <property type="entry name" value="Guanylate_kinase_CS"/>
</dbReference>
<dbReference type="InterPro" id="IPR050716">
    <property type="entry name" value="MAGUK"/>
</dbReference>
<dbReference type="InterPro" id="IPR035475">
    <property type="entry name" value="MPP1_SH3"/>
</dbReference>
<dbReference type="InterPro" id="IPR027417">
    <property type="entry name" value="P-loop_NTPase"/>
</dbReference>
<dbReference type="InterPro" id="IPR001478">
    <property type="entry name" value="PDZ"/>
</dbReference>
<dbReference type="InterPro" id="IPR036034">
    <property type="entry name" value="PDZ_sf"/>
</dbReference>
<dbReference type="InterPro" id="IPR036028">
    <property type="entry name" value="SH3-like_dom_sf"/>
</dbReference>
<dbReference type="InterPro" id="IPR001452">
    <property type="entry name" value="SH3_domain"/>
</dbReference>
<dbReference type="PANTHER" id="PTHR23122">
    <property type="entry name" value="MEMBRANE-ASSOCIATED GUANYLATE KINASE MAGUK"/>
    <property type="match status" value="1"/>
</dbReference>
<dbReference type="Pfam" id="PF00625">
    <property type="entry name" value="Guanylate_kin"/>
    <property type="match status" value="1"/>
</dbReference>
<dbReference type="Pfam" id="PF00595">
    <property type="entry name" value="PDZ"/>
    <property type="match status" value="1"/>
</dbReference>
<dbReference type="Pfam" id="PF00018">
    <property type="entry name" value="SH3_1"/>
    <property type="match status" value="1"/>
</dbReference>
<dbReference type="SMART" id="SM00072">
    <property type="entry name" value="GuKc"/>
    <property type="match status" value="1"/>
</dbReference>
<dbReference type="SMART" id="SM00228">
    <property type="entry name" value="PDZ"/>
    <property type="match status" value="1"/>
</dbReference>
<dbReference type="SMART" id="SM00326">
    <property type="entry name" value="SH3"/>
    <property type="match status" value="1"/>
</dbReference>
<dbReference type="SUPFAM" id="SSF52540">
    <property type="entry name" value="P-loop containing nucleoside triphosphate hydrolases"/>
    <property type="match status" value="1"/>
</dbReference>
<dbReference type="SUPFAM" id="SSF50156">
    <property type="entry name" value="PDZ domain-like"/>
    <property type="match status" value="1"/>
</dbReference>
<dbReference type="SUPFAM" id="SSF50044">
    <property type="entry name" value="SH3-domain"/>
    <property type="match status" value="1"/>
</dbReference>
<dbReference type="PROSITE" id="PS00856">
    <property type="entry name" value="GUANYLATE_KINASE_1"/>
    <property type="match status" value="1"/>
</dbReference>
<dbReference type="PROSITE" id="PS50052">
    <property type="entry name" value="GUANYLATE_KINASE_2"/>
    <property type="match status" value="1"/>
</dbReference>
<dbReference type="PROSITE" id="PS50106">
    <property type="entry name" value="PDZ"/>
    <property type="match status" value="1"/>
</dbReference>
<dbReference type="PROSITE" id="PS50002">
    <property type="entry name" value="SH3"/>
    <property type="match status" value="1"/>
</dbReference>
<feature type="initiator methionine" description="Removed" evidence="3">
    <location>
        <position position="1"/>
    </location>
</feature>
<feature type="chain" id="PRO_0000286142" description="55 kDa erythrocyte membrane protein">
    <location>
        <begin position="2"/>
        <end position="466"/>
    </location>
</feature>
<feature type="domain" description="PDZ" evidence="5">
    <location>
        <begin position="71"/>
        <end position="152"/>
    </location>
</feature>
<feature type="domain" description="SH3" evidence="6">
    <location>
        <begin position="158"/>
        <end position="228"/>
    </location>
</feature>
<feature type="domain" description="Guanylate kinase-like" evidence="4">
    <location>
        <begin position="282"/>
        <end position="451"/>
    </location>
</feature>
<feature type="region of interest" description="Interaction with PALS1" evidence="1">
    <location>
        <begin position="268"/>
        <end position="466"/>
    </location>
</feature>
<feature type="modified residue" description="N-acetylthreonine" evidence="3">
    <location>
        <position position="2"/>
    </location>
</feature>
<feature type="modified residue" description="Phosphoserine" evidence="3">
    <location>
        <position position="19"/>
    </location>
</feature>
<feature type="modified residue" description="Phosphothreonine" evidence="3">
    <location>
        <position position="49"/>
    </location>
</feature>
<feature type="modified residue" description="Phosphoserine" evidence="3">
    <location>
        <position position="57"/>
    </location>
</feature>
<feature type="modified residue" description="Phosphoserine" evidence="3">
    <location>
        <position position="110"/>
    </location>
</feature>
<feature type="modified residue" description="Phosphoserine" evidence="3">
    <location>
        <position position="243"/>
    </location>
</feature>
<gene>
    <name type="primary">MPP1</name>
    <name type="synonym">EMP55</name>
</gene>
<reference key="1">
    <citation type="submission" date="2006-06" db="EMBL/GenBank/DDBJ databases">
        <authorList>
            <consortium name="NIH - Mammalian Gene Collection (MGC) project"/>
        </authorList>
    </citation>
    <scope>NUCLEOTIDE SEQUENCE [LARGE SCALE MRNA]</scope>
    <source>
        <strain>Hereford</strain>
        <tissue>Thalamus</tissue>
    </source>
</reference>
<reference key="2">
    <citation type="journal article" date="2007" name="Hum. Mol. Genet.">
        <title>MPP1 links the Usher protein network and the Crumbs protein complex in the retina.</title>
        <authorList>
            <person name="Gosens I."/>
            <person name="van Wijk E."/>
            <person name="Kersten F.F."/>
            <person name="Krieger E."/>
            <person name="van der Zwaag B."/>
            <person name="Maerker T."/>
            <person name="Letteboer S.J."/>
            <person name="Dusseljee S."/>
            <person name="Peters T."/>
            <person name="Spierenburg H.A."/>
            <person name="Punte I.M."/>
            <person name="Wolfrum U."/>
            <person name="Cremers F.P.M."/>
            <person name="Kremer H."/>
            <person name="Roepman R."/>
        </authorList>
    </citation>
    <scope>INTERACTION WITH PALS1</scope>
</reference>
<name>EM55_BOVIN</name>
<proteinExistence type="evidence at protein level"/>